<name>ISPE_GEOSW</name>
<protein>
    <recommendedName>
        <fullName evidence="1">4-diphosphocytidyl-2-C-methyl-D-erythritol kinase</fullName>
        <shortName evidence="1">CMK</shortName>
        <ecNumber evidence="1">2.7.1.148</ecNumber>
    </recommendedName>
    <alternativeName>
        <fullName evidence="1">4-(cytidine-5'-diphospho)-2-C-methyl-D-erythritol kinase</fullName>
    </alternativeName>
</protein>
<keyword id="KW-0067">ATP-binding</keyword>
<keyword id="KW-0414">Isoprene biosynthesis</keyword>
<keyword id="KW-0418">Kinase</keyword>
<keyword id="KW-0547">Nucleotide-binding</keyword>
<keyword id="KW-0808">Transferase</keyword>
<comment type="function">
    <text evidence="1">Catalyzes the phosphorylation of the position 2 hydroxy group of 4-diphosphocytidyl-2C-methyl-D-erythritol.</text>
</comment>
<comment type="catalytic activity">
    <reaction evidence="1">
        <text>4-CDP-2-C-methyl-D-erythritol + ATP = 4-CDP-2-C-methyl-D-erythritol 2-phosphate + ADP + H(+)</text>
        <dbReference type="Rhea" id="RHEA:18437"/>
        <dbReference type="ChEBI" id="CHEBI:15378"/>
        <dbReference type="ChEBI" id="CHEBI:30616"/>
        <dbReference type="ChEBI" id="CHEBI:57823"/>
        <dbReference type="ChEBI" id="CHEBI:57919"/>
        <dbReference type="ChEBI" id="CHEBI:456216"/>
        <dbReference type="EC" id="2.7.1.148"/>
    </reaction>
</comment>
<comment type="pathway">
    <text evidence="1">Isoprenoid biosynthesis; isopentenyl diphosphate biosynthesis via DXP pathway; isopentenyl diphosphate from 1-deoxy-D-xylulose 5-phosphate: step 3/6.</text>
</comment>
<comment type="similarity">
    <text evidence="1">Belongs to the GHMP kinase family. IspE subfamily.</text>
</comment>
<dbReference type="EC" id="2.7.1.148" evidence="1"/>
<dbReference type="EMBL" id="CP001638">
    <property type="protein sequence ID" value="ACS22983.1"/>
    <property type="molecule type" value="Genomic_DNA"/>
</dbReference>
<dbReference type="SMR" id="C5D367"/>
<dbReference type="STRING" id="471223.GWCH70_0041"/>
<dbReference type="KEGG" id="gwc:GWCH70_0041"/>
<dbReference type="eggNOG" id="COG1947">
    <property type="taxonomic scope" value="Bacteria"/>
</dbReference>
<dbReference type="HOGENOM" id="CLU_053057_1_1_9"/>
<dbReference type="OrthoDB" id="9809438at2"/>
<dbReference type="UniPathway" id="UPA00056">
    <property type="reaction ID" value="UER00094"/>
</dbReference>
<dbReference type="GO" id="GO:0050515">
    <property type="term" value="F:4-(cytidine 5'-diphospho)-2-C-methyl-D-erythritol kinase activity"/>
    <property type="evidence" value="ECO:0007669"/>
    <property type="project" value="UniProtKB-UniRule"/>
</dbReference>
<dbReference type="GO" id="GO:0005524">
    <property type="term" value="F:ATP binding"/>
    <property type="evidence" value="ECO:0007669"/>
    <property type="project" value="UniProtKB-UniRule"/>
</dbReference>
<dbReference type="GO" id="GO:0019288">
    <property type="term" value="P:isopentenyl diphosphate biosynthetic process, methylerythritol 4-phosphate pathway"/>
    <property type="evidence" value="ECO:0007669"/>
    <property type="project" value="UniProtKB-UniRule"/>
</dbReference>
<dbReference type="GO" id="GO:0016114">
    <property type="term" value="P:terpenoid biosynthetic process"/>
    <property type="evidence" value="ECO:0007669"/>
    <property type="project" value="InterPro"/>
</dbReference>
<dbReference type="FunFam" id="3.30.230.10:FF:000029">
    <property type="entry name" value="4-diphosphocytidyl-2-C-methyl-D-erythritol kinase"/>
    <property type="match status" value="1"/>
</dbReference>
<dbReference type="FunFam" id="3.30.70.890:FF:000006">
    <property type="entry name" value="4-diphosphocytidyl-2-C-methyl-D-erythritol kinase"/>
    <property type="match status" value="1"/>
</dbReference>
<dbReference type="Gene3D" id="3.30.230.10">
    <property type="match status" value="1"/>
</dbReference>
<dbReference type="Gene3D" id="3.30.70.890">
    <property type="entry name" value="GHMP kinase, C-terminal domain"/>
    <property type="match status" value="1"/>
</dbReference>
<dbReference type="HAMAP" id="MF_00061">
    <property type="entry name" value="IspE"/>
    <property type="match status" value="1"/>
</dbReference>
<dbReference type="InterPro" id="IPR013750">
    <property type="entry name" value="GHMP_kinase_C_dom"/>
</dbReference>
<dbReference type="InterPro" id="IPR036554">
    <property type="entry name" value="GHMP_kinase_C_sf"/>
</dbReference>
<dbReference type="InterPro" id="IPR006204">
    <property type="entry name" value="GHMP_kinase_N_dom"/>
</dbReference>
<dbReference type="InterPro" id="IPR004424">
    <property type="entry name" value="IspE"/>
</dbReference>
<dbReference type="InterPro" id="IPR020568">
    <property type="entry name" value="Ribosomal_Su5_D2-typ_SF"/>
</dbReference>
<dbReference type="InterPro" id="IPR014721">
    <property type="entry name" value="Ribsml_uS5_D2-typ_fold_subgr"/>
</dbReference>
<dbReference type="NCBIfam" id="TIGR00154">
    <property type="entry name" value="ispE"/>
    <property type="match status" value="1"/>
</dbReference>
<dbReference type="NCBIfam" id="NF011202">
    <property type="entry name" value="PRK14608.1"/>
    <property type="match status" value="1"/>
</dbReference>
<dbReference type="PANTHER" id="PTHR43527">
    <property type="entry name" value="4-DIPHOSPHOCYTIDYL-2-C-METHYL-D-ERYTHRITOL KINASE, CHLOROPLASTIC"/>
    <property type="match status" value="1"/>
</dbReference>
<dbReference type="PANTHER" id="PTHR43527:SF2">
    <property type="entry name" value="4-DIPHOSPHOCYTIDYL-2-C-METHYL-D-ERYTHRITOL KINASE, CHLOROPLASTIC"/>
    <property type="match status" value="1"/>
</dbReference>
<dbReference type="Pfam" id="PF08544">
    <property type="entry name" value="GHMP_kinases_C"/>
    <property type="match status" value="1"/>
</dbReference>
<dbReference type="Pfam" id="PF00288">
    <property type="entry name" value="GHMP_kinases_N"/>
    <property type="match status" value="1"/>
</dbReference>
<dbReference type="PIRSF" id="PIRSF010376">
    <property type="entry name" value="IspE"/>
    <property type="match status" value="1"/>
</dbReference>
<dbReference type="SUPFAM" id="SSF55060">
    <property type="entry name" value="GHMP Kinase, C-terminal domain"/>
    <property type="match status" value="1"/>
</dbReference>
<dbReference type="SUPFAM" id="SSF54211">
    <property type="entry name" value="Ribosomal protein S5 domain 2-like"/>
    <property type="match status" value="1"/>
</dbReference>
<feature type="chain" id="PRO_1000202381" description="4-diphosphocytidyl-2-C-methyl-D-erythritol kinase">
    <location>
        <begin position="1"/>
        <end position="289"/>
    </location>
</feature>
<feature type="active site" evidence="1">
    <location>
        <position position="10"/>
    </location>
</feature>
<feature type="active site" evidence="1">
    <location>
        <position position="136"/>
    </location>
</feature>
<feature type="binding site" evidence="1">
    <location>
        <begin position="94"/>
        <end position="104"/>
    </location>
    <ligand>
        <name>ATP</name>
        <dbReference type="ChEBI" id="CHEBI:30616"/>
    </ligand>
</feature>
<accession>C5D367</accession>
<organism>
    <name type="scientific">Geobacillus sp. (strain WCH70)</name>
    <dbReference type="NCBI Taxonomy" id="471223"/>
    <lineage>
        <taxon>Bacteria</taxon>
        <taxon>Bacillati</taxon>
        <taxon>Bacillota</taxon>
        <taxon>Bacilli</taxon>
        <taxon>Bacillales</taxon>
        <taxon>Anoxybacillaceae</taxon>
        <taxon>Geobacillus</taxon>
    </lineage>
</organism>
<sequence>MRLLVKAPAKINLSLDVLHKRPDGYHEVKMVMTTIDLADRIELIPQMDDTIQIISKNRFVPDDHRNLAYQAAKLLKDTFAIKQGIAISITKNIPVAAGLAGGSSDAAATLRGLNKLWNLGLTLDELAELGAKIGSDVSFCVYGGTAIATGRGEKITPIPAPPPCWVILAKPSIGVSTAEVYRNLKVDEIPHPDVDGMVEAIYRQDYAAICKLVGNVLEEVTLKKYPEVAHIKEQMKRFGADAVLMSGSGPTVFGLVQHDSRLQRIYNGLRGFCDQVFAVRILGERHSLD</sequence>
<gene>
    <name evidence="1" type="primary">ispE</name>
    <name type="ordered locus">GWCH70_0041</name>
</gene>
<evidence type="ECO:0000255" key="1">
    <source>
        <dbReference type="HAMAP-Rule" id="MF_00061"/>
    </source>
</evidence>
<proteinExistence type="inferred from homology"/>
<reference key="1">
    <citation type="submission" date="2009-06" db="EMBL/GenBank/DDBJ databases">
        <title>Complete sequence of chromosome of Geopacillus sp. WCH70.</title>
        <authorList>
            <consortium name="US DOE Joint Genome Institute"/>
            <person name="Lucas S."/>
            <person name="Copeland A."/>
            <person name="Lapidus A."/>
            <person name="Glavina del Rio T."/>
            <person name="Dalin E."/>
            <person name="Tice H."/>
            <person name="Bruce D."/>
            <person name="Goodwin L."/>
            <person name="Pitluck S."/>
            <person name="Chertkov O."/>
            <person name="Brettin T."/>
            <person name="Detter J.C."/>
            <person name="Han C."/>
            <person name="Larimer F."/>
            <person name="Land M."/>
            <person name="Hauser L."/>
            <person name="Kyrpides N."/>
            <person name="Mikhailova N."/>
            <person name="Brumm P."/>
            <person name="Mead D.A."/>
            <person name="Richardson P."/>
        </authorList>
    </citation>
    <scope>NUCLEOTIDE SEQUENCE [LARGE SCALE GENOMIC DNA]</scope>
    <source>
        <strain>WCH70</strain>
    </source>
</reference>